<proteinExistence type="inferred from homology"/>
<feature type="signal peptide" evidence="3">
    <location>
        <begin position="1"/>
        <end position="19"/>
    </location>
</feature>
<feature type="chain" id="PRO_0000311722" description="Dipeptidyl-peptidase 5">
    <location>
        <begin position="20"/>
        <end position="683"/>
    </location>
</feature>
<feature type="active site" description="Charge relay system" evidence="2">
    <location>
        <position position="535"/>
    </location>
</feature>
<feature type="active site" description="Charge relay system" evidence="2">
    <location>
        <position position="617"/>
    </location>
</feature>
<feature type="active site" description="Charge relay system" evidence="2">
    <location>
        <position position="649"/>
    </location>
</feature>
<feature type="glycosylation site" description="N-linked (GlcNAc...) asparagine" evidence="3">
    <location>
        <position position="53"/>
    </location>
</feature>
<feature type="glycosylation site" description="N-linked (GlcNAc...) asparagine" evidence="3">
    <location>
        <position position="69"/>
    </location>
</feature>
<feature type="glycosylation site" description="N-linked (GlcNAc...) asparagine" evidence="3">
    <location>
        <position position="103"/>
    </location>
</feature>
<feature type="glycosylation site" description="N-linked (GlcNAc...) asparagine" evidence="3">
    <location>
        <position position="116"/>
    </location>
</feature>
<feature type="glycosylation site" description="N-linked (GlcNAc...) asparagine" evidence="3">
    <location>
        <position position="126"/>
    </location>
</feature>
<feature type="glycosylation site" description="N-linked (GlcNAc...) asparagine" evidence="3">
    <location>
        <position position="400"/>
    </location>
</feature>
<protein>
    <recommendedName>
        <fullName>Dipeptidyl-peptidase 5</fullName>
        <ecNumber>3.4.14.-</ecNumber>
    </recommendedName>
    <alternativeName>
        <fullName>Dipeptidyl-peptidase V</fullName>
        <shortName>DPP V</shortName>
        <shortName>DppV</shortName>
    </alternativeName>
</protein>
<keyword id="KW-0963">Cytoplasm</keyword>
<keyword id="KW-0325">Glycoprotein</keyword>
<keyword id="KW-0378">Hydrolase</keyword>
<keyword id="KW-0539">Nucleus</keyword>
<keyword id="KW-0645">Protease</keyword>
<keyword id="KW-1185">Reference proteome</keyword>
<keyword id="KW-0964">Secreted</keyword>
<keyword id="KW-0720">Serine protease</keyword>
<keyword id="KW-0732">Signal</keyword>
<comment type="subcellular location">
    <subcellularLocation>
        <location evidence="1">Secreted</location>
    </subcellularLocation>
    <subcellularLocation>
        <location evidence="4">Cytoplasm</location>
    </subcellularLocation>
    <subcellularLocation>
        <location evidence="4">Nucleus</location>
    </subcellularLocation>
</comment>
<comment type="similarity">
    <text evidence="5">Belongs to the peptidase S9C family.</text>
</comment>
<reference evidence="6" key="1">
    <citation type="journal article" date="2002" name="Nature">
        <title>The genome sequence of Schizosaccharomyces pombe.</title>
        <authorList>
            <person name="Wood V."/>
            <person name="Gwilliam R."/>
            <person name="Rajandream M.A."/>
            <person name="Lyne M.H."/>
            <person name="Lyne R."/>
            <person name="Stewart A."/>
            <person name="Sgouros J.G."/>
            <person name="Peat N."/>
            <person name="Hayles J."/>
            <person name="Baker S.G."/>
            <person name="Basham D."/>
            <person name="Bowman S."/>
            <person name="Brooks K."/>
            <person name="Brown D."/>
            <person name="Brown S."/>
            <person name="Chillingworth T."/>
            <person name="Churcher C.M."/>
            <person name="Collins M."/>
            <person name="Connor R."/>
            <person name="Cronin A."/>
            <person name="Davis P."/>
            <person name="Feltwell T."/>
            <person name="Fraser A."/>
            <person name="Gentles S."/>
            <person name="Goble A."/>
            <person name="Hamlin N."/>
            <person name="Harris D.E."/>
            <person name="Hidalgo J."/>
            <person name="Hodgson G."/>
            <person name="Holroyd S."/>
            <person name="Hornsby T."/>
            <person name="Howarth S."/>
            <person name="Huckle E.J."/>
            <person name="Hunt S."/>
            <person name="Jagels K."/>
            <person name="James K.D."/>
            <person name="Jones L."/>
            <person name="Jones M."/>
            <person name="Leather S."/>
            <person name="McDonald S."/>
            <person name="McLean J."/>
            <person name="Mooney P."/>
            <person name="Moule S."/>
            <person name="Mungall K.L."/>
            <person name="Murphy L.D."/>
            <person name="Niblett D."/>
            <person name="Odell C."/>
            <person name="Oliver K."/>
            <person name="O'Neil S."/>
            <person name="Pearson D."/>
            <person name="Quail M.A."/>
            <person name="Rabbinowitsch E."/>
            <person name="Rutherford K.M."/>
            <person name="Rutter S."/>
            <person name="Saunders D."/>
            <person name="Seeger K."/>
            <person name="Sharp S."/>
            <person name="Skelton J."/>
            <person name="Simmonds M.N."/>
            <person name="Squares R."/>
            <person name="Squares S."/>
            <person name="Stevens K."/>
            <person name="Taylor K."/>
            <person name="Taylor R.G."/>
            <person name="Tivey A."/>
            <person name="Walsh S.V."/>
            <person name="Warren T."/>
            <person name="Whitehead S."/>
            <person name="Woodward J.R."/>
            <person name="Volckaert G."/>
            <person name="Aert R."/>
            <person name="Robben J."/>
            <person name="Grymonprez B."/>
            <person name="Weltjens I."/>
            <person name="Vanstreels E."/>
            <person name="Rieger M."/>
            <person name="Schaefer M."/>
            <person name="Mueller-Auer S."/>
            <person name="Gabel C."/>
            <person name="Fuchs M."/>
            <person name="Duesterhoeft A."/>
            <person name="Fritzc C."/>
            <person name="Holzer E."/>
            <person name="Moestl D."/>
            <person name="Hilbert H."/>
            <person name="Borzym K."/>
            <person name="Langer I."/>
            <person name="Beck A."/>
            <person name="Lehrach H."/>
            <person name="Reinhardt R."/>
            <person name="Pohl T.M."/>
            <person name="Eger P."/>
            <person name="Zimmermann W."/>
            <person name="Wedler H."/>
            <person name="Wambutt R."/>
            <person name="Purnelle B."/>
            <person name="Goffeau A."/>
            <person name="Cadieu E."/>
            <person name="Dreano S."/>
            <person name="Gloux S."/>
            <person name="Lelaure V."/>
            <person name="Mottier S."/>
            <person name="Galibert F."/>
            <person name="Aves S.J."/>
            <person name="Xiang Z."/>
            <person name="Hunt C."/>
            <person name="Moore K."/>
            <person name="Hurst S.M."/>
            <person name="Lucas M."/>
            <person name="Rochet M."/>
            <person name="Gaillardin C."/>
            <person name="Tallada V.A."/>
            <person name="Garzon A."/>
            <person name="Thode G."/>
            <person name="Daga R.R."/>
            <person name="Cruzado L."/>
            <person name="Jimenez J."/>
            <person name="Sanchez M."/>
            <person name="del Rey F."/>
            <person name="Benito J."/>
            <person name="Dominguez A."/>
            <person name="Revuelta J.L."/>
            <person name="Moreno S."/>
            <person name="Armstrong J."/>
            <person name="Forsburg S.L."/>
            <person name="Cerutti L."/>
            <person name="Lowe T."/>
            <person name="McCombie W.R."/>
            <person name="Paulsen I."/>
            <person name="Potashkin J."/>
            <person name="Shpakovski G.V."/>
            <person name="Ussery D."/>
            <person name="Barrell B.G."/>
            <person name="Nurse P."/>
        </authorList>
    </citation>
    <scope>NUCLEOTIDE SEQUENCE [LARGE SCALE GENOMIC DNA]</scope>
    <source>
        <strain>972 / ATCC 24843</strain>
    </source>
</reference>
<reference evidence="5" key="2">
    <citation type="journal article" date="2006" name="Nat. Biotechnol.">
        <title>ORFeome cloning and global analysis of protein localization in the fission yeast Schizosaccharomyces pombe.</title>
        <authorList>
            <person name="Matsuyama A."/>
            <person name="Arai R."/>
            <person name="Yashiroda Y."/>
            <person name="Shirai A."/>
            <person name="Kamata A."/>
            <person name="Sekido S."/>
            <person name="Kobayashi Y."/>
            <person name="Hashimoto A."/>
            <person name="Hamamoto M."/>
            <person name="Hiraoka Y."/>
            <person name="Horinouchi S."/>
            <person name="Yoshida M."/>
        </authorList>
    </citation>
    <scope>SUBCELLULAR LOCATION [LARGE SCALE ANALYSIS]</scope>
</reference>
<name>DPP5_SCHPO</name>
<organism>
    <name type="scientific">Schizosaccharomyces pombe (strain 972 / ATCC 24843)</name>
    <name type="common">Fission yeast</name>
    <dbReference type="NCBI Taxonomy" id="284812"/>
    <lineage>
        <taxon>Eukaryota</taxon>
        <taxon>Fungi</taxon>
        <taxon>Dikarya</taxon>
        <taxon>Ascomycota</taxon>
        <taxon>Taphrinomycotina</taxon>
        <taxon>Schizosaccharomycetes</taxon>
        <taxon>Schizosaccharomycetales</taxon>
        <taxon>Schizosaccharomycetaceae</taxon>
        <taxon>Schizosaccharomyces</taxon>
    </lineage>
</organism>
<accession>Q9P778</accession>
<evidence type="ECO:0000250" key="1"/>
<evidence type="ECO:0000250" key="2">
    <source>
        <dbReference type="UniProtKB" id="P23687"/>
    </source>
</evidence>
<evidence type="ECO:0000255" key="3"/>
<evidence type="ECO:0000269" key="4">
    <source>
    </source>
</evidence>
<evidence type="ECO:0000305" key="5"/>
<evidence type="ECO:0000312" key="6">
    <source>
        <dbReference type="EMBL" id="CAB88242.1"/>
    </source>
</evidence>
<dbReference type="EC" id="3.4.14.-"/>
<dbReference type="EMBL" id="CU329671">
    <property type="protein sequence ID" value="CAB88242.1"/>
    <property type="molecule type" value="Genomic_DNA"/>
</dbReference>
<dbReference type="SMR" id="Q9P778"/>
<dbReference type="BioGRID" id="276217">
    <property type="interactions" value="2"/>
</dbReference>
<dbReference type="DIP" id="DIP-59123N"/>
<dbReference type="FunCoup" id="Q9P778">
    <property type="interactions" value="21"/>
</dbReference>
<dbReference type="IntAct" id="Q9P778">
    <property type="interactions" value="1"/>
</dbReference>
<dbReference type="STRING" id="284812.Q9P778"/>
<dbReference type="ESTHER" id="schpo-SPBC1711.12">
    <property type="family name" value="Prolyl_oligopeptidase_S9"/>
</dbReference>
<dbReference type="iPTMnet" id="Q9P778"/>
<dbReference type="PaxDb" id="4896-SPBC1711.12.1"/>
<dbReference type="EnsemblFungi" id="SPBC1711.12.1">
    <property type="protein sequence ID" value="SPBC1711.12.1:pep"/>
    <property type="gene ID" value="SPBC1711.12"/>
</dbReference>
<dbReference type="KEGG" id="spo:2539662"/>
<dbReference type="PomBase" id="SPBC1711.12"/>
<dbReference type="VEuPathDB" id="FungiDB:SPBC1711.12"/>
<dbReference type="eggNOG" id="KOG2100">
    <property type="taxonomic scope" value="Eukaryota"/>
</dbReference>
<dbReference type="HOGENOM" id="CLU_008615_0_1_1"/>
<dbReference type="InParanoid" id="Q9P778"/>
<dbReference type="OMA" id="NDSIWIT"/>
<dbReference type="PhylomeDB" id="Q9P778"/>
<dbReference type="PRO" id="PR:Q9P778"/>
<dbReference type="Proteomes" id="UP000002485">
    <property type="component" value="Chromosome II"/>
</dbReference>
<dbReference type="GO" id="GO:0005829">
    <property type="term" value="C:cytosol"/>
    <property type="evidence" value="ECO:0007005"/>
    <property type="project" value="PomBase"/>
</dbReference>
<dbReference type="GO" id="GO:0005576">
    <property type="term" value="C:extracellular region"/>
    <property type="evidence" value="ECO:0007669"/>
    <property type="project" value="UniProtKB-SubCell"/>
</dbReference>
<dbReference type="GO" id="GO:0005634">
    <property type="term" value="C:nucleus"/>
    <property type="evidence" value="ECO:0007005"/>
    <property type="project" value="PomBase"/>
</dbReference>
<dbReference type="GO" id="GO:0004252">
    <property type="term" value="F:serine-type endopeptidase activity"/>
    <property type="evidence" value="ECO:0000318"/>
    <property type="project" value="GO_Central"/>
</dbReference>
<dbReference type="GO" id="GO:0006508">
    <property type="term" value="P:proteolysis"/>
    <property type="evidence" value="ECO:0007669"/>
    <property type="project" value="UniProtKB-KW"/>
</dbReference>
<dbReference type="FunFam" id="3.40.50.1820:FF:000028">
    <property type="entry name" value="S9 family peptidase"/>
    <property type="match status" value="1"/>
</dbReference>
<dbReference type="Gene3D" id="3.40.50.1820">
    <property type="entry name" value="alpha/beta hydrolase"/>
    <property type="match status" value="1"/>
</dbReference>
<dbReference type="InterPro" id="IPR029058">
    <property type="entry name" value="AB_hydrolase_fold"/>
</dbReference>
<dbReference type="InterPro" id="IPR001375">
    <property type="entry name" value="Peptidase_S9_cat"/>
</dbReference>
<dbReference type="PANTHER" id="PTHR42776:SF13">
    <property type="entry name" value="DIPEPTIDYL-PEPTIDASE 5"/>
    <property type="match status" value="1"/>
</dbReference>
<dbReference type="PANTHER" id="PTHR42776">
    <property type="entry name" value="SERINE PEPTIDASE S9 FAMILY MEMBER"/>
    <property type="match status" value="1"/>
</dbReference>
<dbReference type="Pfam" id="PF00326">
    <property type="entry name" value="Peptidase_S9"/>
    <property type="match status" value="1"/>
</dbReference>
<dbReference type="SUPFAM" id="SSF53474">
    <property type="entry name" value="alpha/beta-Hydrolases"/>
    <property type="match status" value="1"/>
</dbReference>
<dbReference type="SUPFAM" id="SSF82171">
    <property type="entry name" value="DPP6 N-terminal domain-like"/>
    <property type="match status" value="1"/>
</dbReference>
<sequence length="683" mass="77766">MHSLFKQLVFFLVMTLTAADKAAFDAESMLEAPRRSAVVSNPLGNLGIFIESNYSFADHKYNSGIYLLNESTRNHQELLVHGKSNKALTWITDSAFLYAREDNSSSSSILLFDVNNRSERIIYNHNSSISDIRIGEKNNHYRIVFSSVDNSLVKGPSNVHVYDHLFVRHWDRWNTGSRNTLYFIELDKKTENSNYFEISSEKAIDLLKETGLESPVEPFGGLSDFDSNYDKLVFVAKDPKLNPATQTKTVVYEINLNTRNLKSLSTAKGACSSPRLAKDGNHIAWLEMQTPQYESDQNQIMVYESESGAKKHIARHWDRSPSSIEWGVFKGGEPGLFAIAENYGKQILFFVSIFHHQVIPMTEEHSVSSISVPKSSSLWLTKSSLINPPYYAKINVETLNESVLLENNVGLSPTSYEEIWFPGTHGHRIHAWIVKPESFDKSKKYPVAVLIHGGPQGSWTDSWSTRWNPAVFANAGFIVFALDPTGSTGYGQRFTDSIALDWGGKPYKDIELGVEYIKNHLSYADSEKMVALGASYGGYMINWIQGHPLGRQFRALVCHDGVFNTLNTFYNTEELYFSIHDFGGTPWENRVIYERWNPSNFVNYWATPELVIHSSKDYRLTESEGIAAFNVLQYKGIPSRLLVFEDENHWVIKPDNSLRWHKEVLSWILHYTKDCNANEDETF</sequence>
<gene>
    <name type="ORF">SPBC1711.12</name>
</gene>